<reference key="1">
    <citation type="journal article" date="2005" name="Nature">
        <title>The map-based sequence of the rice genome.</title>
        <authorList>
            <consortium name="International rice genome sequencing project (IRGSP)"/>
        </authorList>
    </citation>
    <scope>NUCLEOTIDE SEQUENCE [LARGE SCALE GENOMIC DNA]</scope>
    <source>
        <strain>cv. Nipponbare</strain>
    </source>
</reference>
<reference key="2">
    <citation type="journal article" date="2008" name="Nucleic Acids Res.">
        <title>The rice annotation project database (RAP-DB): 2008 update.</title>
        <authorList>
            <consortium name="The rice annotation project (RAP)"/>
        </authorList>
    </citation>
    <scope>GENOME REANNOTATION</scope>
    <source>
        <strain>cv. Nipponbare</strain>
    </source>
</reference>
<reference key="3">
    <citation type="journal article" date="2013" name="Rice">
        <title>Improvement of the Oryza sativa Nipponbare reference genome using next generation sequence and optical map data.</title>
        <authorList>
            <person name="Kawahara Y."/>
            <person name="de la Bastide M."/>
            <person name="Hamilton J.P."/>
            <person name="Kanamori H."/>
            <person name="McCombie W.R."/>
            <person name="Ouyang S."/>
            <person name="Schwartz D.C."/>
            <person name="Tanaka T."/>
            <person name="Wu J."/>
            <person name="Zhou S."/>
            <person name="Childs K.L."/>
            <person name="Davidson R.M."/>
            <person name="Lin H."/>
            <person name="Quesada-Ocampo L."/>
            <person name="Vaillancourt B."/>
            <person name="Sakai H."/>
            <person name="Lee S.S."/>
            <person name="Kim J."/>
            <person name="Numa H."/>
            <person name="Itoh T."/>
            <person name="Buell C.R."/>
            <person name="Matsumoto T."/>
        </authorList>
    </citation>
    <scope>GENOME REANNOTATION</scope>
    <source>
        <strain>cv. Nipponbare</strain>
    </source>
</reference>
<reference key="4">
    <citation type="journal article" date="2005" name="PLoS Biol.">
        <title>The genomes of Oryza sativa: a history of duplications.</title>
        <authorList>
            <person name="Yu J."/>
            <person name="Wang J."/>
            <person name="Lin W."/>
            <person name="Li S."/>
            <person name="Li H."/>
            <person name="Zhou J."/>
            <person name="Ni P."/>
            <person name="Dong W."/>
            <person name="Hu S."/>
            <person name="Zeng C."/>
            <person name="Zhang J."/>
            <person name="Zhang Y."/>
            <person name="Li R."/>
            <person name="Xu Z."/>
            <person name="Li S."/>
            <person name="Li X."/>
            <person name="Zheng H."/>
            <person name="Cong L."/>
            <person name="Lin L."/>
            <person name="Yin J."/>
            <person name="Geng J."/>
            <person name="Li G."/>
            <person name="Shi J."/>
            <person name="Liu J."/>
            <person name="Lv H."/>
            <person name="Li J."/>
            <person name="Wang J."/>
            <person name="Deng Y."/>
            <person name="Ran L."/>
            <person name="Shi X."/>
            <person name="Wang X."/>
            <person name="Wu Q."/>
            <person name="Li C."/>
            <person name="Ren X."/>
            <person name="Wang J."/>
            <person name="Wang X."/>
            <person name="Li D."/>
            <person name="Liu D."/>
            <person name="Zhang X."/>
            <person name="Ji Z."/>
            <person name="Zhao W."/>
            <person name="Sun Y."/>
            <person name="Zhang Z."/>
            <person name="Bao J."/>
            <person name="Han Y."/>
            <person name="Dong L."/>
            <person name="Ji J."/>
            <person name="Chen P."/>
            <person name="Wu S."/>
            <person name="Liu J."/>
            <person name="Xiao Y."/>
            <person name="Bu D."/>
            <person name="Tan J."/>
            <person name="Yang L."/>
            <person name="Ye C."/>
            <person name="Zhang J."/>
            <person name="Xu J."/>
            <person name="Zhou Y."/>
            <person name="Yu Y."/>
            <person name="Zhang B."/>
            <person name="Zhuang S."/>
            <person name="Wei H."/>
            <person name="Liu B."/>
            <person name="Lei M."/>
            <person name="Yu H."/>
            <person name="Li Y."/>
            <person name="Xu H."/>
            <person name="Wei S."/>
            <person name="He X."/>
            <person name="Fang L."/>
            <person name="Zhang Z."/>
            <person name="Zhang Y."/>
            <person name="Huang X."/>
            <person name="Su Z."/>
            <person name="Tong W."/>
            <person name="Li J."/>
            <person name="Tong Z."/>
            <person name="Li S."/>
            <person name="Ye J."/>
            <person name="Wang L."/>
            <person name="Fang L."/>
            <person name="Lei T."/>
            <person name="Chen C.-S."/>
            <person name="Chen H.-C."/>
            <person name="Xu Z."/>
            <person name="Li H."/>
            <person name="Huang H."/>
            <person name="Zhang F."/>
            <person name="Xu H."/>
            <person name="Li N."/>
            <person name="Zhao C."/>
            <person name="Li S."/>
            <person name="Dong L."/>
            <person name="Huang Y."/>
            <person name="Li L."/>
            <person name="Xi Y."/>
            <person name="Qi Q."/>
            <person name="Li W."/>
            <person name="Zhang B."/>
            <person name="Hu W."/>
            <person name="Zhang Y."/>
            <person name="Tian X."/>
            <person name="Jiao Y."/>
            <person name="Liang X."/>
            <person name="Jin J."/>
            <person name="Gao L."/>
            <person name="Zheng W."/>
            <person name="Hao B."/>
            <person name="Liu S.-M."/>
            <person name="Wang W."/>
            <person name="Yuan L."/>
            <person name="Cao M."/>
            <person name="McDermott J."/>
            <person name="Samudrala R."/>
            <person name="Wang J."/>
            <person name="Wong G.K.-S."/>
            <person name="Yang H."/>
        </authorList>
    </citation>
    <scope>NUCLEOTIDE SEQUENCE [LARGE SCALE GENOMIC DNA]</scope>
    <source>
        <strain>cv. Nipponbare</strain>
    </source>
</reference>
<reference key="5">
    <citation type="journal article" date="2003" name="Science">
        <title>Collection, mapping, and annotation of over 28,000 cDNA clones from japonica rice.</title>
        <authorList>
            <consortium name="The rice full-length cDNA consortium"/>
        </authorList>
    </citation>
    <scope>NUCLEOTIDE SEQUENCE [LARGE SCALE MRNA]</scope>
    <source>
        <strain>cv. Nipponbare</strain>
    </source>
</reference>
<reference key="6">
    <citation type="journal article" date="2004" name="Plant J.">
        <title>Development of an efficient method for the isolation of factors involved in gene transcription during rice embryo development.</title>
        <authorList>
            <person name="Ye R."/>
            <person name="Yao Q.-H."/>
            <person name="Xu Z.-H."/>
            <person name="Xue H.-W."/>
        </authorList>
    </citation>
    <scope>NUCLEOTIDE SEQUENCE [MRNA] OF 370-635</scope>
    <source>
        <tissue>Embryo</tissue>
    </source>
</reference>
<reference key="7">
    <citation type="journal article" date="2008" name="BMC Genomics">
        <title>Genome-wide analysis of CCCH zinc finger family in Arabidopsis and rice.</title>
        <authorList>
            <person name="Wang D."/>
            <person name="Guo Y."/>
            <person name="Wu C."/>
            <person name="Yang G."/>
            <person name="Li Y."/>
            <person name="Zheng C."/>
        </authorList>
    </citation>
    <scope>NOMENCLATURE</scope>
</reference>
<dbReference type="EMBL" id="AP003866">
    <property type="protein sequence ID" value="BAC55671.1"/>
    <property type="molecule type" value="Genomic_DNA"/>
</dbReference>
<dbReference type="EMBL" id="AP008213">
    <property type="protein sequence ID" value="BAF21942.1"/>
    <property type="molecule type" value="Genomic_DNA"/>
</dbReference>
<dbReference type="EMBL" id="AP014963">
    <property type="protein sequence ID" value="BAT02206.1"/>
    <property type="molecule type" value="Genomic_DNA"/>
</dbReference>
<dbReference type="EMBL" id="CM000144">
    <property type="protein sequence ID" value="EAZ40346.1"/>
    <property type="molecule type" value="Genomic_DNA"/>
</dbReference>
<dbReference type="EMBL" id="AK067784">
    <property type="protein sequence ID" value="BAG90595.1"/>
    <property type="molecule type" value="mRNA"/>
</dbReference>
<dbReference type="EMBL" id="AK067895">
    <property type="protein sequence ID" value="BAG90654.1"/>
    <property type="molecule type" value="mRNA"/>
</dbReference>
<dbReference type="EMBL" id="AJ575241">
    <property type="protein sequence ID" value="CAE00877.1"/>
    <property type="molecule type" value="mRNA"/>
</dbReference>
<dbReference type="RefSeq" id="XP_015647507.1">
    <property type="nucleotide sequence ID" value="XM_015792021.1"/>
</dbReference>
<dbReference type="RefSeq" id="XP_015647508.1">
    <property type="nucleotide sequence ID" value="XM_015792022.1"/>
</dbReference>
<dbReference type="SMR" id="Q84SL2"/>
<dbReference type="FunCoup" id="Q84SL2">
    <property type="interactions" value="28"/>
</dbReference>
<dbReference type="STRING" id="39947.Q84SL2"/>
<dbReference type="PaxDb" id="39947-Q84SL2"/>
<dbReference type="EnsemblPlants" id="Os07t0568300-01">
    <property type="protein sequence ID" value="Os07t0568300-01"/>
    <property type="gene ID" value="Os07g0568300"/>
</dbReference>
<dbReference type="EnsemblPlants" id="Os07t0568300-02">
    <property type="protein sequence ID" value="Os07t0568300-02"/>
    <property type="gene ID" value="Os07g0568300"/>
</dbReference>
<dbReference type="Gramene" id="Os07t0568300-01">
    <property type="protein sequence ID" value="Os07t0568300-01"/>
    <property type="gene ID" value="Os07g0568300"/>
</dbReference>
<dbReference type="Gramene" id="Os07t0568300-02">
    <property type="protein sequence ID" value="Os07t0568300-02"/>
    <property type="gene ID" value="Os07g0568300"/>
</dbReference>
<dbReference type="KEGG" id="dosa:Os07g0568300"/>
<dbReference type="eggNOG" id="KOG1595">
    <property type="taxonomic scope" value="Eukaryota"/>
</dbReference>
<dbReference type="HOGENOM" id="CLU_015068_1_0_1"/>
<dbReference type="InParanoid" id="Q84SL2"/>
<dbReference type="OMA" id="SARWWVA"/>
<dbReference type="OrthoDB" id="410307at2759"/>
<dbReference type="Proteomes" id="UP000000763">
    <property type="component" value="Chromosome 7"/>
</dbReference>
<dbReference type="Proteomes" id="UP000007752">
    <property type="component" value="Chromosome 7"/>
</dbReference>
<dbReference type="Proteomes" id="UP000059680">
    <property type="component" value="Chromosome 7"/>
</dbReference>
<dbReference type="GO" id="GO:0003677">
    <property type="term" value="F:DNA binding"/>
    <property type="evidence" value="ECO:0007669"/>
    <property type="project" value="UniProtKB-KW"/>
</dbReference>
<dbReference type="GO" id="GO:0008270">
    <property type="term" value="F:zinc ion binding"/>
    <property type="evidence" value="ECO:0007669"/>
    <property type="project" value="UniProtKB-KW"/>
</dbReference>
<dbReference type="GO" id="GO:0010468">
    <property type="term" value="P:regulation of gene expression"/>
    <property type="evidence" value="ECO:0007669"/>
    <property type="project" value="UniProtKB-ARBA"/>
</dbReference>
<dbReference type="Gene3D" id="3.30.1370.210">
    <property type="match status" value="1"/>
</dbReference>
<dbReference type="Gene3D" id="1.25.40.20">
    <property type="entry name" value="Ankyrin repeat-containing domain"/>
    <property type="match status" value="1"/>
</dbReference>
<dbReference type="InterPro" id="IPR002110">
    <property type="entry name" value="Ankyrin_rpt"/>
</dbReference>
<dbReference type="InterPro" id="IPR036770">
    <property type="entry name" value="Ankyrin_rpt-contain_sf"/>
</dbReference>
<dbReference type="InterPro" id="IPR045234">
    <property type="entry name" value="Unkempt-like"/>
</dbReference>
<dbReference type="InterPro" id="IPR000571">
    <property type="entry name" value="Znf_CCCH"/>
</dbReference>
<dbReference type="InterPro" id="IPR036855">
    <property type="entry name" value="Znf_CCCH_sf"/>
</dbReference>
<dbReference type="PANTHER" id="PTHR14493:SF50">
    <property type="entry name" value="RING FINGER PROTEIN UNKEMPT"/>
    <property type="match status" value="1"/>
</dbReference>
<dbReference type="PANTHER" id="PTHR14493">
    <property type="entry name" value="UNKEMPT FAMILY MEMBER"/>
    <property type="match status" value="1"/>
</dbReference>
<dbReference type="Pfam" id="PF12796">
    <property type="entry name" value="Ank_2"/>
    <property type="match status" value="1"/>
</dbReference>
<dbReference type="Pfam" id="PF00642">
    <property type="entry name" value="zf-CCCH"/>
    <property type="match status" value="1"/>
</dbReference>
<dbReference type="Pfam" id="PF25512">
    <property type="entry name" value="zf-CCCH_AtC3H23"/>
    <property type="match status" value="1"/>
</dbReference>
<dbReference type="SMART" id="SM00248">
    <property type="entry name" value="ANK"/>
    <property type="match status" value="2"/>
</dbReference>
<dbReference type="SMART" id="SM00356">
    <property type="entry name" value="ZnF_C3H1"/>
    <property type="match status" value="2"/>
</dbReference>
<dbReference type="SUPFAM" id="SSF48403">
    <property type="entry name" value="Ankyrin repeat"/>
    <property type="match status" value="1"/>
</dbReference>
<dbReference type="SUPFAM" id="SSF90229">
    <property type="entry name" value="CCCH zinc finger"/>
    <property type="match status" value="1"/>
</dbReference>
<dbReference type="PROSITE" id="PS50297">
    <property type="entry name" value="ANK_REP_REGION"/>
    <property type="match status" value="1"/>
</dbReference>
<dbReference type="PROSITE" id="PS50088">
    <property type="entry name" value="ANK_REPEAT"/>
    <property type="match status" value="2"/>
</dbReference>
<dbReference type="PROSITE" id="PS50103">
    <property type="entry name" value="ZF_C3H1"/>
    <property type="match status" value="1"/>
</dbReference>
<proteinExistence type="evidence at transcript level"/>
<evidence type="ECO:0000255" key="1">
    <source>
        <dbReference type="PROSITE-ProRule" id="PRU00723"/>
    </source>
</evidence>
<evidence type="ECO:0000256" key="2">
    <source>
        <dbReference type="SAM" id="MobiDB-lite"/>
    </source>
</evidence>
<accession>Q84SL2</accession>
<accession>B7EDZ8</accession>
<accession>Q70KS5</accession>
<name>C3H50_ORYSJ</name>
<organism>
    <name type="scientific">Oryza sativa subsp. japonica</name>
    <name type="common">Rice</name>
    <dbReference type="NCBI Taxonomy" id="39947"/>
    <lineage>
        <taxon>Eukaryota</taxon>
        <taxon>Viridiplantae</taxon>
        <taxon>Streptophyta</taxon>
        <taxon>Embryophyta</taxon>
        <taxon>Tracheophyta</taxon>
        <taxon>Spermatophyta</taxon>
        <taxon>Magnoliopsida</taxon>
        <taxon>Liliopsida</taxon>
        <taxon>Poales</taxon>
        <taxon>Poaceae</taxon>
        <taxon>BOP clade</taxon>
        <taxon>Oryzoideae</taxon>
        <taxon>Oryzeae</taxon>
        <taxon>Oryzinae</taxon>
        <taxon>Oryza</taxon>
        <taxon>Oryza sativa</taxon>
    </lineage>
</organism>
<protein>
    <recommendedName>
        <fullName>Zinc finger CCCH domain-containing protein 50</fullName>
        <shortName>OsC3H50</shortName>
    </recommendedName>
    <alternativeName>
        <fullName>Protein ZF</fullName>
    </alternativeName>
</protein>
<keyword id="KW-0040">ANK repeat</keyword>
<keyword id="KW-0238">DNA-binding</keyword>
<keyword id="KW-0479">Metal-binding</keyword>
<keyword id="KW-1185">Reference proteome</keyword>
<keyword id="KW-0677">Repeat</keyword>
<keyword id="KW-0862">Zinc</keyword>
<keyword id="KW-0863">Zinc-finger</keyword>
<feature type="chain" id="PRO_0000346844" description="Zinc finger CCCH domain-containing protein 50">
    <location>
        <begin position="1"/>
        <end position="657"/>
    </location>
</feature>
<feature type="repeat" description="ANK 1">
    <location>
        <begin position="68"/>
        <end position="97"/>
    </location>
</feature>
<feature type="repeat" description="ANK 2">
    <location>
        <begin position="104"/>
        <end position="136"/>
    </location>
</feature>
<feature type="zinc finger region" description="C3H1-type 1" evidence="1">
    <location>
        <begin position="274"/>
        <end position="302"/>
    </location>
</feature>
<feature type="zinc finger region" description="C3H1-type 2" evidence="1">
    <location>
        <begin position="311"/>
        <end position="333"/>
    </location>
</feature>
<feature type="region of interest" description="Disordered" evidence="2">
    <location>
        <begin position="176"/>
        <end position="222"/>
    </location>
</feature>
<feature type="region of interest" description="Disordered" evidence="2">
    <location>
        <begin position="507"/>
        <end position="566"/>
    </location>
</feature>
<feature type="compositionally biased region" description="Low complexity" evidence="2">
    <location>
        <begin position="176"/>
        <end position="206"/>
    </location>
</feature>
<feature type="compositionally biased region" description="Polar residues" evidence="2">
    <location>
        <begin position="549"/>
        <end position="562"/>
    </location>
</feature>
<gene>
    <name type="ordered locus">Os07g0568300</name>
    <name type="ordered locus">LOC_Os07g38090</name>
    <name type="ORF">OJ1092_A07.129</name>
    <name type="ORF">OsJ_023829</name>
</gene>
<sequence>MGELADLVVVPSQPPLAGGRRDRLAALLELAAADDVDGLRGALAEGGEEAAELADGVGLWYGRSKAYEARTPLMVAATYGSAGVVSLLVGLGGCVDVNRRPGADGATALHCAASGGSRNAVAVVKLLLAAGADPATPDSAGRFPADVILAPPASPDALGDLEVLLGRRRALAVATSVASGSSSPPLSSSPDEGNRSPSSRSSSLSPITVDRGKKEYPVDPTLPDIKSSVYASDEFRMFAFKVRPCSRAYSHDWTECPFVHPGENARRRDPRKHPYTAVPCPNFRRPGGCPSGDSCEFSHGVFESWLHPSQYRTRLCKEGAACARRICFFAHDEDELRHVPHNSGAGLLSPRASSSIDMTAAAALGLLPGSPTRHFAPPPVSPSAGSNGGAAAAHWLQGSRLRSSFNARDAAVDDLGMLLEWESQYLGALCLPPSSRPQPRLSAGLSIRPTIAPSNLEDMYASDMAMSPRFPNDQGHSVYSPAHKSALLNKLHQQKGLLSPVNTNRMYSPRALDPSSLAHSPFGGMSPRSPRTMEPTSPLSARVGAPATQRPSVGSPRNSSAWGTVGSPMGKVDWGVDSEELVRLRRPAQPGFGEDETDVSWVQSLVSNAELNGKRGEVQGMPGTSALMNRPDLNNQGDLLDQTVIGAWLEQMHLDQK</sequence>